<comment type="function">
    <text evidence="3">Odorant receptor.</text>
</comment>
<comment type="subcellular location">
    <subcellularLocation>
        <location>Cell membrane</location>
        <topology>Multi-pass membrane protein</topology>
    </subcellularLocation>
</comment>
<comment type="similarity">
    <text evidence="2">Belongs to the G-protein coupled receptor 1 family.</text>
</comment>
<comment type="caution">
    <text evidence="3">It is uncertain whether Met-1 or Met-23 is the initiator.</text>
</comment>
<comment type="sequence caution" evidence="3">
    <conflict type="erroneous initiation">
        <sequence resource="EMBL-CDS" id="BAC06080"/>
    </conflict>
</comment>
<comment type="online information" name="Human Olfactory Receptor Data Exploratorium (HORDE)">
    <link uri="http://genome.weizmann.ac.il/horde/card/index/symbol:OR9K2"/>
</comment>
<reference key="1">
    <citation type="submission" date="2001-07" db="EMBL/GenBank/DDBJ databases">
        <title>Genome-wide discovery and analysis of human seven transmembrane helix receptor genes.</title>
        <authorList>
            <person name="Suwa M."/>
            <person name="Sato T."/>
            <person name="Okouchi I."/>
            <person name="Arita M."/>
            <person name="Futami K."/>
            <person name="Matsumoto S."/>
            <person name="Tsutsumi S."/>
            <person name="Aburatani H."/>
            <person name="Asai K."/>
            <person name="Akiyama Y."/>
        </authorList>
    </citation>
    <scope>NUCLEOTIDE SEQUENCE [GENOMIC DNA]</scope>
</reference>
<reference key="2">
    <citation type="journal article" date="2004" name="Genome Res.">
        <title>The status, quality, and expansion of the NIH full-length cDNA project: the Mammalian Gene Collection (MGC).</title>
        <authorList>
            <consortium name="The MGC Project Team"/>
        </authorList>
    </citation>
    <scope>NUCLEOTIDE SEQUENCE [LARGE SCALE MRNA]</scope>
    <source>
        <tissue>Testis</tissue>
    </source>
</reference>
<reference key="3">
    <citation type="journal article" date="2004" name="Proc. Natl. Acad. Sci. U.S.A.">
        <title>The human olfactory receptor gene family.</title>
        <authorList>
            <person name="Malnic B."/>
            <person name="Godfrey P.A."/>
            <person name="Buck L.B."/>
        </authorList>
    </citation>
    <scope>IDENTIFICATION</scope>
</reference>
<reference key="4">
    <citation type="journal article" date="2004" name="Proc. Natl. Acad. Sci. U.S.A.">
        <authorList>
            <person name="Malnic B."/>
            <person name="Godfrey P.A."/>
            <person name="Buck L.B."/>
        </authorList>
    </citation>
    <scope>ERRATUM OF PUBMED:14983052</scope>
</reference>
<proteinExistence type="evidence at transcript level"/>
<evidence type="ECO:0000255" key="1"/>
<evidence type="ECO:0000255" key="2">
    <source>
        <dbReference type="PROSITE-ProRule" id="PRU00521"/>
    </source>
</evidence>
<evidence type="ECO:0000305" key="3"/>
<name>OR9K2_HUMAN</name>
<sequence>MLGSKPRVHLYILPCASQQVSTMGDRGTSNHSEMTDFILAGFRVRPELHILLFLLFLFVYAMILLGNVGMMTIIMTDPRLNTPMYFFLGNLSFIDLFYSSVIEPKAMINFWSENKSISFAGCVAQLFLFALLIVTEGFLLAAMAYDRFIAICNPLLYSVQMSTRLCTQLVAGSYFCGCISSVIQTSMTFTLSFCASRAVDHFYCDSRPLQRLSCSDLFIHRMISFSLSCIIILPTIIVIIVSYMYIVSTVLKIHSTEGHKKAFSTCSSHLGVVSVLYGAVFFMYLTPDRFPELSKVASLCYSLVTPMLNPLIYSLRNKDVQEALKKFLEKKNIIL</sequence>
<organism>
    <name type="scientific">Homo sapiens</name>
    <name type="common">Human</name>
    <dbReference type="NCBI Taxonomy" id="9606"/>
    <lineage>
        <taxon>Eukaryota</taxon>
        <taxon>Metazoa</taxon>
        <taxon>Chordata</taxon>
        <taxon>Craniata</taxon>
        <taxon>Vertebrata</taxon>
        <taxon>Euteleostomi</taxon>
        <taxon>Mammalia</taxon>
        <taxon>Eutheria</taxon>
        <taxon>Euarchontoglires</taxon>
        <taxon>Primates</taxon>
        <taxon>Haplorrhini</taxon>
        <taxon>Catarrhini</taxon>
        <taxon>Hominidae</taxon>
        <taxon>Homo</taxon>
    </lineage>
</organism>
<feature type="chain" id="PRO_0000150682" description="Olfactory receptor 9K2">
    <location>
        <begin position="1"/>
        <end position="335"/>
    </location>
</feature>
<feature type="topological domain" description="Extracellular" evidence="1">
    <location>
        <begin position="1"/>
        <end position="50"/>
    </location>
</feature>
<feature type="transmembrane region" description="Helical; Name=1" evidence="1">
    <location>
        <begin position="51"/>
        <end position="71"/>
    </location>
</feature>
<feature type="topological domain" description="Cytoplasmic" evidence="1">
    <location>
        <begin position="72"/>
        <end position="79"/>
    </location>
</feature>
<feature type="transmembrane region" description="Helical; Name=2" evidence="1">
    <location>
        <begin position="80"/>
        <end position="100"/>
    </location>
</feature>
<feature type="topological domain" description="Extracellular" evidence="1">
    <location>
        <begin position="101"/>
        <end position="124"/>
    </location>
</feature>
<feature type="transmembrane region" description="Helical; Name=3" evidence="1">
    <location>
        <begin position="125"/>
        <end position="145"/>
    </location>
</feature>
<feature type="topological domain" description="Cytoplasmic" evidence="1">
    <location>
        <begin position="146"/>
        <end position="164"/>
    </location>
</feature>
<feature type="transmembrane region" description="Helical; Name=4" evidence="1">
    <location>
        <begin position="165"/>
        <end position="185"/>
    </location>
</feature>
<feature type="topological domain" description="Extracellular" evidence="1">
    <location>
        <begin position="186"/>
        <end position="222"/>
    </location>
</feature>
<feature type="transmembrane region" description="Helical; Name=5" evidence="1">
    <location>
        <begin position="223"/>
        <end position="242"/>
    </location>
</feature>
<feature type="topological domain" description="Cytoplasmic" evidence="1">
    <location>
        <begin position="243"/>
        <end position="262"/>
    </location>
</feature>
<feature type="transmembrane region" description="Helical; Name=6" evidence="1">
    <location>
        <begin position="263"/>
        <end position="283"/>
    </location>
</feature>
<feature type="topological domain" description="Extracellular" evidence="1">
    <location>
        <begin position="284"/>
        <end position="296"/>
    </location>
</feature>
<feature type="topological domain" description="Cytoplasmic" evidence="1">
    <location>
        <begin position="316"/>
        <end position="335"/>
    </location>
</feature>
<feature type="glycosylation site" description="N-linked (GlcNAc...) asparagine" evidence="1">
    <location>
        <position position="30"/>
    </location>
</feature>
<feature type="glycosylation site" description="N-linked (GlcNAc...) asparagine" evidence="1">
    <location>
        <position position="114"/>
    </location>
</feature>
<feature type="disulfide bond" evidence="2">
    <location>
        <begin position="122"/>
        <end position="214"/>
    </location>
</feature>
<feature type="sequence variant" id="VAR_048057" description="In dbSNP:rs12303066.">
    <original>R</original>
    <variation>C</variation>
    <location>
        <position position="45"/>
    </location>
</feature>
<feature type="sequence variant" id="VAR_048058" description="In dbSNP:rs7305779.">
    <original>E</original>
    <variation>A</variation>
    <location>
        <position position="103"/>
    </location>
</feature>
<feature type="sequence variant" id="VAR_048059" description="In dbSNP:rs7306491.">
    <original>R</original>
    <variation>H</variation>
    <location>
        <position position="207"/>
    </location>
</feature>
<gene>
    <name type="primary">OR9K2</name>
</gene>
<keyword id="KW-1003">Cell membrane</keyword>
<keyword id="KW-1015">Disulfide bond</keyword>
<keyword id="KW-0297">G-protein coupled receptor</keyword>
<keyword id="KW-0325">Glycoprotein</keyword>
<keyword id="KW-0472">Membrane</keyword>
<keyword id="KW-0552">Olfaction</keyword>
<keyword id="KW-0675">Receptor</keyword>
<keyword id="KW-1185">Reference proteome</keyword>
<keyword id="KW-0716">Sensory transduction</keyword>
<keyword id="KW-0807">Transducer</keyword>
<keyword id="KW-0812">Transmembrane</keyword>
<keyword id="KW-1133">Transmembrane helix</keyword>
<protein>
    <recommendedName>
        <fullName>Olfactory receptor 9K2</fullName>
    </recommendedName>
    <alternativeName>
        <fullName>Olfactory receptor OR12-2</fullName>
    </alternativeName>
</protein>
<accession>Q8NGE7</accession>
<accession>B9EH19</accession>
<accession>Q6IFD6</accession>
<dbReference type="EMBL" id="AB065862">
    <property type="protein sequence ID" value="BAC06080.1"/>
    <property type="status" value="ALT_INIT"/>
    <property type="molecule type" value="Genomic_DNA"/>
</dbReference>
<dbReference type="EMBL" id="BC136988">
    <property type="protein sequence ID" value="AAI36989.1"/>
    <property type="molecule type" value="mRNA"/>
</dbReference>
<dbReference type="EMBL" id="BK004326">
    <property type="protein sequence ID" value="DAA04724.1"/>
    <property type="molecule type" value="Genomic_DNA"/>
</dbReference>
<dbReference type="RefSeq" id="NP_001005243.1">
    <property type="nucleotide sequence ID" value="NM_001005243.1"/>
</dbReference>
<dbReference type="SMR" id="Q8NGE7"/>
<dbReference type="FunCoup" id="Q8NGE7">
    <property type="interactions" value="416"/>
</dbReference>
<dbReference type="STRING" id="9606.ENSP00000307598"/>
<dbReference type="GlyCosmos" id="Q8NGE7">
    <property type="glycosylation" value="2 sites, No reported glycans"/>
</dbReference>
<dbReference type="GlyGen" id="Q8NGE7">
    <property type="glycosylation" value="2 sites"/>
</dbReference>
<dbReference type="iPTMnet" id="Q8NGE7"/>
<dbReference type="PhosphoSitePlus" id="Q8NGE7"/>
<dbReference type="BioMuta" id="OR9K2"/>
<dbReference type="DMDM" id="218511732"/>
<dbReference type="jPOST" id="Q8NGE7"/>
<dbReference type="MassIVE" id="Q8NGE7"/>
<dbReference type="PaxDb" id="9606-ENSP00000307598"/>
<dbReference type="Antibodypedia" id="65934">
    <property type="antibodies" value="67 antibodies from 20 providers"/>
</dbReference>
<dbReference type="DNASU" id="441639"/>
<dbReference type="GeneID" id="441639"/>
<dbReference type="KEGG" id="hsa:441639"/>
<dbReference type="UCSC" id="uc010spe.3">
    <property type="organism name" value="human"/>
</dbReference>
<dbReference type="AGR" id="HGNC:15339"/>
<dbReference type="CTD" id="441639"/>
<dbReference type="GeneCards" id="OR9K2"/>
<dbReference type="HGNC" id="HGNC:15339">
    <property type="gene designation" value="OR9K2"/>
</dbReference>
<dbReference type="neXtProt" id="NX_Q8NGE7"/>
<dbReference type="PharmGKB" id="PA32799"/>
<dbReference type="VEuPathDB" id="HostDB:ENSG00000170605"/>
<dbReference type="eggNOG" id="ENOG502SJ6B">
    <property type="taxonomic scope" value="Eukaryota"/>
</dbReference>
<dbReference type="HOGENOM" id="CLU_012526_1_0_1"/>
<dbReference type="InParanoid" id="Q8NGE7"/>
<dbReference type="OrthoDB" id="9831456at2759"/>
<dbReference type="PAN-GO" id="Q8NGE7">
    <property type="GO annotations" value="2 GO annotations based on evolutionary models"/>
</dbReference>
<dbReference type="PhylomeDB" id="Q8NGE7"/>
<dbReference type="TreeFam" id="TF352758"/>
<dbReference type="PathwayCommons" id="Q8NGE7"/>
<dbReference type="Reactome" id="R-HSA-9752946">
    <property type="pathway name" value="Expression and translocation of olfactory receptors"/>
</dbReference>
<dbReference type="BioGRID-ORCS" id="441639">
    <property type="hits" value="16 hits in 739 CRISPR screens"/>
</dbReference>
<dbReference type="GeneWiki" id="OR9K2"/>
<dbReference type="GenomeRNAi" id="441639"/>
<dbReference type="Pharos" id="Q8NGE7">
    <property type="development level" value="Tdark"/>
</dbReference>
<dbReference type="PRO" id="PR:Q8NGE7"/>
<dbReference type="Proteomes" id="UP000005640">
    <property type="component" value="Chromosome 12"/>
</dbReference>
<dbReference type="RNAct" id="Q8NGE7">
    <property type="molecule type" value="protein"/>
</dbReference>
<dbReference type="GO" id="GO:0005886">
    <property type="term" value="C:plasma membrane"/>
    <property type="evidence" value="ECO:0007669"/>
    <property type="project" value="UniProtKB-SubCell"/>
</dbReference>
<dbReference type="GO" id="GO:0004930">
    <property type="term" value="F:G protein-coupled receptor activity"/>
    <property type="evidence" value="ECO:0007669"/>
    <property type="project" value="UniProtKB-KW"/>
</dbReference>
<dbReference type="GO" id="GO:0005549">
    <property type="term" value="F:odorant binding"/>
    <property type="evidence" value="ECO:0000318"/>
    <property type="project" value="GO_Central"/>
</dbReference>
<dbReference type="GO" id="GO:0004984">
    <property type="term" value="F:olfactory receptor activity"/>
    <property type="evidence" value="ECO:0000318"/>
    <property type="project" value="GO_Central"/>
</dbReference>
<dbReference type="CDD" id="cd15419">
    <property type="entry name" value="7tmA_OR9K2-like"/>
    <property type="match status" value="1"/>
</dbReference>
<dbReference type="FunFam" id="1.20.1070.10:FF:000004">
    <property type="entry name" value="Olfactory receptor"/>
    <property type="match status" value="1"/>
</dbReference>
<dbReference type="Gene3D" id="1.20.1070.10">
    <property type="entry name" value="Rhodopsin 7-helix transmembrane proteins"/>
    <property type="match status" value="1"/>
</dbReference>
<dbReference type="InterPro" id="IPR000276">
    <property type="entry name" value="GPCR_Rhodpsn"/>
</dbReference>
<dbReference type="InterPro" id="IPR017452">
    <property type="entry name" value="GPCR_Rhodpsn_7TM"/>
</dbReference>
<dbReference type="InterPro" id="IPR000725">
    <property type="entry name" value="Olfact_rcpt"/>
</dbReference>
<dbReference type="PANTHER" id="PTHR48018">
    <property type="entry name" value="OLFACTORY RECEPTOR"/>
    <property type="match status" value="1"/>
</dbReference>
<dbReference type="Pfam" id="PF13853">
    <property type="entry name" value="7tm_4"/>
    <property type="match status" value="1"/>
</dbReference>
<dbReference type="PRINTS" id="PR00237">
    <property type="entry name" value="GPCRRHODOPSN"/>
</dbReference>
<dbReference type="PRINTS" id="PR00245">
    <property type="entry name" value="OLFACTORYR"/>
</dbReference>
<dbReference type="SUPFAM" id="SSF81321">
    <property type="entry name" value="Family A G protein-coupled receptor-like"/>
    <property type="match status" value="1"/>
</dbReference>
<dbReference type="PROSITE" id="PS00237">
    <property type="entry name" value="G_PROTEIN_RECEP_F1_1"/>
    <property type="match status" value="1"/>
</dbReference>
<dbReference type="PROSITE" id="PS50262">
    <property type="entry name" value="G_PROTEIN_RECEP_F1_2"/>
    <property type="match status" value="1"/>
</dbReference>